<evidence type="ECO:0000255" key="1">
    <source>
        <dbReference type="HAMAP-Rule" id="MF_01325"/>
    </source>
</evidence>
<evidence type="ECO:0000256" key="2">
    <source>
        <dbReference type="SAM" id="MobiDB-lite"/>
    </source>
</evidence>
<evidence type="ECO:0000305" key="3"/>
<comment type="function">
    <text evidence="1">One of the primary rRNA binding proteins, it binds directly near the 3'-end of the 23S rRNA, where it nucleates assembly of the 50S subunit.</text>
</comment>
<comment type="subunit">
    <text evidence="1">Part of the 50S ribosomal subunit. Forms a cluster with proteins L14 and L19.</text>
</comment>
<comment type="similarity">
    <text evidence="1">Belongs to the universal ribosomal protein uL3 family.</text>
</comment>
<sequence length="209" mass="22183">MGAILGKKIGMTRLYNDKREAVPCTVIQAGPCYVTQVKSTEKDGYEAYQLGFGERDEKKVSKPLAGHYKKAGKNPGYILSEVSKSLIVGELEAGATVPVDVFKEGDKVNVLGVTKGKGFAGVVKRHNFGGGSRTHGQSDRLRAPGSVGGSSDPSRTFKGTRMAGRMGGKNKTVQNLVIVKVMPESNLIVVKGAVPGPKNSYVKIVSTTK</sequence>
<proteinExistence type="inferred from homology"/>
<accession>Q8KAH2</accession>
<name>RL3_CHLTE</name>
<dbReference type="EMBL" id="AE006470">
    <property type="protein sequence ID" value="AAM73405.1"/>
    <property type="molecule type" value="Genomic_DNA"/>
</dbReference>
<dbReference type="RefSeq" id="NP_663063.1">
    <property type="nucleotide sequence ID" value="NC_002932.3"/>
</dbReference>
<dbReference type="RefSeq" id="WP_010933842.1">
    <property type="nucleotide sequence ID" value="NC_002932.3"/>
</dbReference>
<dbReference type="SMR" id="Q8KAH2"/>
<dbReference type="STRING" id="194439.CT2189"/>
<dbReference type="EnsemblBacteria" id="AAM73405">
    <property type="protein sequence ID" value="AAM73405"/>
    <property type="gene ID" value="CT2189"/>
</dbReference>
<dbReference type="KEGG" id="cte:CT2189"/>
<dbReference type="PATRIC" id="fig|194439.7.peg.1988"/>
<dbReference type="eggNOG" id="COG0087">
    <property type="taxonomic scope" value="Bacteria"/>
</dbReference>
<dbReference type="HOGENOM" id="CLU_044142_4_1_10"/>
<dbReference type="OrthoDB" id="9806135at2"/>
<dbReference type="Proteomes" id="UP000001007">
    <property type="component" value="Chromosome"/>
</dbReference>
<dbReference type="GO" id="GO:0022625">
    <property type="term" value="C:cytosolic large ribosomal subunit"/>
    <property type="evidence" value="ECO:0007669"/>
    <property type="project" value="TreeGrafter"/>
</dbReference>
<dbReference type="GO" id="GO:0019843">
    <property type="term" value="F:rRNA binding"/>
    <property type="evidence" value="ECO:0007669"/>
    <property type="project" value="UniProtKB-UniRule"/>
</dbReference>
<dbReference type="GO" id="GO:0003735">
    <property type="term" value="F:structural constituent of ribosome"/>
    <property type="evidence" value="ECO:0007669"/>
    <property type="project" value="InterPro"/>
</dbReference>
<dbReference type="GO" id="GO:0006412">
    <property type="term" value="P:translation"/>
    <property type="evidence" value="ECO:0007669"/>
    <property type="project" value="UniProtKB-UniRule"/>
</dbReference>
<dbReference type="FunFam" id="2.40.30.10:FF:000004">
    <property type="entry name" value="50S ribosomal protein L3"/>
    <property type="match status" value="1"/>
</dbReference>
<dbReference type="FunFam" id="3.30.160.810:FF:000001">
    <property type="entry name" value="50S ribosomal protein L3"/>
    <property type="match status" value="1"/>
</dbReference>
<dbReference type="Gene3D" id="3.30.160.810">
    <property type="match status" value="1"/>
</dbReference>
<dbReference type="Gene3D" id="2.40.30.10">
    <property type="entry name" value="Translation factors"/>
    <property type="match status" value="1"/>
</dbReference>
<dbReference type="HAMAP" id="MF_01325_B">
    <property type="entry name" value="Ribosomal_uL3_B"/>
    <property type="match status" value="1"/>
</dbReference>
<dbReference type="InterPro" id="IPR000597">
    <property type="entry name" value="Ribosomal_uL3"/>
</dbReference>
<dbReference type="InterPro" id="IPR019927">
    <property type="entry name" value="Ribosomal_uL3_bac/org-type"/>
</dbReference>
<dbReference type="InterPro" id="IPR019926">
    <property type="entry name" value="Ribosomal_uL3_CS"/>
</dbReference>
<dbReference type="InterPro" id="IPR009000">
    <property type="entry name" value="Transl_B-barrel_sf"/>
</dbReference>
<dbReference type="NCBIfam" id="TIGR03625">
    <property type="entry name" value="L3_bact"/>
    <property type="match status" value="1"/>
</dbReference>
<dbReference type="PANTHER" id="PTHR11229">
    <property type="entry name" value="50S RIBOSOMAL PROTEIN L3"/>
    <property type="match status" value="1"/>
</dbReference>
<dbReference type="PANTHER" id="PTHR11229:SF16">
    <property type="entry name" value="LARGE RIBOSOMAL SUBUNIT PROTEIN UL3C"/>
    <property type="match status" value="1"/>
</dbReference>
<dbReference type="Pfam" id="PF00297">
    <property type="entry name" value="Ribosomal_L3"/>
    <property type="match status" value="1"/>
</dbReference>
<dbReference type="SUPFAM" id="SSF50447">
    <property type="entry name" value="Translation proteins"/>
    <property type="match status" value="1"/>
</dbReference>
<dbReference type="PROSITE" id="PS00474">
    <property type="entry name" value="RIBOSOMAL_L3"/>
    <property type="match status" value="1"/>
</dbReference>
<gene>
    <name evidence="1" type="primary">rplC</name>
    <name type="ordered locus">CT2189</name>
</gene>
<organism>
    <name type="scientific">Chlorobaculum tepidum (strain ATCC 49652 / DSM 12025 / NBRC 103806 / TLS)</name>
    <name type="common">Chlorobium tepidum</name>
    <dbReference type="NCBI Taxonomy" id="194439"/>
    <lineage>
        <taxon>Bacteria</taxon>
        <taxon>Pseudomonadati</taxon>
        <taxon>Chlorobiota</taxon>
        <taxon>Chlorobiia</taxon>
        <taxon>Chlorobiales</taxon>
        <taxon>Chlorobiaceae</taxon>
        <taxon>Chlorobaculum</taxon>
    </lineage>
</organism>
<feature type="chain" id="PRO_0000077088" description="Large ribosomal subunit protein uL3">
    <location>
        <begin position="1"/>
        <end position="209"/>
    </location>
</feature>
<feature type="region of interest" description="Disordered" evidence="2">
    <location>
        <begin position="127"/>
        <end position="166"/>
    </location>
</feature>
<reference key="1">
    <citation type="journal article" date="2002" name="Proc. Natl. Acad. Sci. U.S.A.">
        <title>The complete genome sequence of Chlorobium tepidum TLS, a photosynthetic, anaerobic, green-sulfur bacterium.</title>
        <authorList>
            <person name="Eisen J.A."/>
            <person name="Nelson K.E."/>
            <person name="Paulsen I.T."/>
            <person name="Heidelberg J.F."/>
            <person name="Wu M."/>
            <person name="Dodson R.J."/>
            <person name="DeBoy R.T."/>
            <person name="Gwinn M.L."/>
            <person name="Nelson W.C."/>
            <person name="Haft D.H."/>
            <person name="Hickey E.K."/>
            <person name="Peterson J.D."/>
            <person name="Durkin A.S."/>
            <person name="Kolonay J.F."/>
            <person name="Yang F."/>
            <person name="Holt I.E."/>
            <person name="Umayam L.A."/>
            <person name="Mason T.M."/>
            <person name="Brenner M."/>
            <person name="Shea T.P."/>
            <person name="Parksey D.S."/>
            <person name="Nierman W.C."/>
            <person name="Feldblyum T.V."/>
            <person name="Hansen C.L."/>
            <person name="Craven M.B."/>
            <person name="Radune D."/>
            <person name="Vamathevan J.J."/>
            <person name="Khouri H.M."/>
            <person name="White O."/>
            <person name="Gruber T.M."/>
            <person name="Ketchum K.A."/>
            <person name="Venter J.C."/>
            <person name="Tettelin H."/>
            <person name="Bryant D.A."/>
            <person name="Fraser C.M."/>
        </authorList>
    </citation>
    <scope>NUCLEOTIDE SEQUENCE [LARGE SCALE GENOMIC DNA]</scope>
    <source>
        <strain>ATCC 49652 / DSM 12025 / NBRC 103806 / TLS</strain>
    </source>
</reference>
<keyword id="KW-1185">Reference proteome</keyword>
<keyword id="KW-0687">Ribonucleoprotein</keyword>
<keyword id="KW-0689">Ribosomal protein</keyword>
<keyword id="KW-0694">RNA-binding</keyword>
<keyword id="KW-0699">rRNA-binding</keyword>
<protein>
    <recommendedName>
        <fullName evidence="1">Large ribosomal subunit protein uL3</fullName>
    </recommendedName>
    <alternativeName>
        <fullName evidence="3">50S ribosomal protein L3</fullName>
    </alternativeName>
</protein>